<evidence type="ECO:0000255" key="1">
    <source>
        <dbReference type="HAMAP-Rule" id="MF_00003"/>
    </source>
</evidence>
<evidence type="ECO:0000256" key="2">
    <source>
        <dbReference type="SAM" id="MobiDB-lite"/>
    </source>
</evidence>
<comment type="function">
    <text evidence="1">One of several proteins that assist in the late maturation steps of the functional core of the 30S ribosomal subunit. Associates with free 30S ribosomal subunits (but not with 30S subunits that are part of 70S ribosomes or polysomes). Required for efficient processing of 16S rRNA. May interact with the 5'-terminal helix region of 16S rRNA.</text>
</comment>
<comment type="subunit">
    <text evidence="1">Monomer. Binds 30S ribosomal subunits, but not 50S ribosomal subunits or 70S ribosomes.</text>
</comment>
<comment type="subcellular location">
    <subcellularLocation>
        <location evidence="1">Cytoplasm</location>
    </subcellularLocation>
</comment>
<comment type="similarity">
    <text evidence="1">Belongs to the RbfA family.</text>
</comment>
<feature type="chain" id="PRO_1000000205" description="Ribosome-binding factor A">
    <location>
        <begin position="1"/>
        <end position="146"/>
    </location>
</feature>
<feature type="region of interest" description="Disordered" evidence="2">
    <location>
        <begin position="122"/>
        <end position="146"/>
    </location>
</feature>
<feature type="compositionally biased region" description="Polar residues" evidence="2">
    <location>
        <begin position="122"/>
        <end position="134"/>
    </location>
</feature>
<feature type="compositionally biased region" description="Acidic residues" evidence="2">
    <location>
        <begin position="135"/>
        <end position="146"/>
    </location>
</feature>
<sequence>MAKEFSRTRRIAQQLQQELAVVLQRDMKDPRIGFVTVNDVDVSRDLSYAKVFVTFFEEDKELVQEKLNALITAAPYIRTLVAGRMKLRVMPEIRFVYDSSLVEGMRMSNLVSQVINSDKAKQQQFGSAEDVTSNDIDEADDTEGKA</sequence>
<organism>
    <name type="scientific">Shewanella sp. (strain ANA-3)</name>
    <dbReference type="NCBI Taxonomy" id="94122"/>
    <lineage>
        <taxon>Bacteria</taxon>
        <taxon>Pseudomonadati</taxon>
        <taxon>Pseudomonadota</taxon>
        <taxon>Gammaproteobacteria</taxon>
        <taxon>Alteromonadales</taxon>
        <taxon>Shewanellaceae</taxon>
        <taxon>Shewanella</taxon>
    </lineage>
</organism>
<keyword id="KW-0963">Cytoplasm</keyword>
<keyword id="KW-0690">Ribosome biogenesis</keyword>
<proteinExistence type="inferred from homology"/>
<reference key="1">
    <citation type="submission" date="2006-09" db="EMBL/GenBank/DDBJ databases">
        <title>Complete sequence of chromosome 1 of Shewanella sp. ANA-3.</title>
        <authorList>
            <person name="Copeland A."/>
            <person name="Lucas S."/>
            <person name="Lapidus A."/>
            <person name="Barry K."/>
            <person name="Detter J.C."/>
            <person name="Glavina del Rio T."/>
            <person name="Hammon N."/>
            <person name="Israni S."/>
            <person name="Dalin E."/>
            <person name="Tice H."/>
            <person name="Pitluck S."/>
            <person name="Chertkov O."/>
            <person name="Brettin T."/>
            <person name="Bruce D."/>
            <person name="Han C."/>
            <person name="Tapia R."/>
            <person name="Gilna P."/>
            <person name="Schmutz J."/>
            <person name="Larimer F."/>
            <person name="Land M."/>
            <person name="Hauser L."/>
            <person name="Kyrpides N."/>
            <person name="Kim E."/>
            <person name="Newman D."/>
            <person name="Salticov C."/>
            <person name="Konstantinidis K."/>
            <person name="Klappenback J."/>
            <person name="Tiedje J."/>
            <person name="Richardson P."/>
        </authorList>
    </citation>
    <scope>NUCLEOTIDE SEQUENCE [LARGE SCALE GENOMIC DNA]</scope>
    <source>
        <strain>ANA-3</strain>
    </source>
</reference>
<gene>
    <name evidence="1" type="primary">rbfA</name>
    <name type="ordered locus">Shewana3_1031</name>
</gene>
<accession>A0KTZ7</accession>
<dbReference type="EMBL" id="CP000469">
    <property type="protein sequence ID" value="ABK47266.1"/>
    <property type="molecule type" value="Genomic_DNA"/>
</dbReference>
<dbReference type="RefSeq" id="WP_011716144.1">
    <property type="nucleotide sequence ID" value="NC_008577.1"/>
</dbReference>
<dbReference type="SMR" id="A0KTZ7"/>
<dbReference type="STRING" id="94122.Shewana3_1031"/>
<dbReference type="KEGG" id="shn:Shewana3_1031"/>
<dbReference type="eggNOG" id="COG0858">
    <property type="taxonomic scope" value="Bacteria"/>
</dbReference>
<dbReference type="HOGENOM" id="CLU_089475_5_0_6"/>
<dbReference type="OrthoDB" id="307788at2"/>
<dbReference type="Proteomes" id="UP000002589">
    <property type="component" value="Chromosome"/>
</dbReference>
<dbReference type="GO" id="GO:0005829">
    <property type="term" value="C:cytosol"/>
    <property type="evidence" value="ECO:0007669"/>
    <property type="project" value="TreeGrafter"/>
</dbReference>
<dbReference type="GO" id="GO:0043024">
    <property type="term" value="F:ribosomal small subunit binding"/>
    <property type="evidence" value="ECO:0007669"/>
    <property type="project" value="TreeGrafter"/>
</dbReference>
<dbReference type="GO" id="GO:0030490">
    <property type="term" value="P:maturation of SSU-rRNA"/>
    <property type="evidence" value="ECO:0007669"/>
    <property type="project" value="UniProtKB-UniRule"/>
</dbReference>
<dbReference type="FunFam" id="3.30.300.20:FF:000007">
    <property type="entry name" value="Ribosome-binding factor A"/>
    <property type="match status" value="1"/>
</dbReference>
<dbReference type="Gene3D" id="3.30.300.20">
    <property type="match status" value="1"/>
</dbReference>
<dbReference type="HAMAP" id="MF_00003">
    <property type="entry name" value="RbfA"/>
    <property type="match status" value="1"/>
</dbReference>
<dbReference type="InterPro" id="IPR015946">
    <property type="entry name" value="KH_dom-like_a/b"/>
</dbReference>
<dbReference type="InterPro" id="IPR000238">
    <property type="entry name" value="RbfA"/>
</dbReference>
<dbReference type="InterPro" id="IPR023799">
    <property type="entry name" value="RbfA_dom_sf"/>
</dbReference>
<dbReference type="InterPro" id="IPR020053">
    <property type="entry name" value="Ribosome-bd_factorA_CS"/>
</dbReference>
<dbReference type="NCBIfam" id="TIGR00082">
    <property type="entry name" value="rbfA"/>
    <property type="match status" value="1"/>
</dbReference>
<dbReference type="PANTHER" id="PTHR33515">
    <property type="entry name" value="RIBOSOME-BINDING FACTOR A, CHLOROPLASTIC-RELATED"/>
    <property type="match status" value="1"/>
</dbReference>
<dbReference type="PANTHER" id="PTHR33515:SF1">
    <property type="entry name" value="RIBOSOME-BINDING FACTOR A, CHLOROPLASTIC-RELATED"/>
    <property type="match status" value="1"/>
</dbReference>
<dbReference type="Pfam" id="PF02033">
    <property type="entry name" value="RBFA"/>
    <property type="match status" value="1"/>
</dbReference>
<dbReference type="SUPFAM" id="SSF89919">
    <property type="entry name" value="Ribosome-binding factor A, RbfA"/>
    <property type="match status" value="1"/>
</dbReference>
<dbReference type="PROSITE" id="PS01319">
    <property type="entry name" value="RBFA"/>
    <property type="match status" value="1"/>
</dbReference>
<name>RBFA_SHESA</name>
<protein>
    <recommendedName>
        <fullName evidence="1">Ribosome-binding factor A</fullName>
    </recommendedName>
</protein>